<gene>
    <name evidence="3" type="ordered locus">At3g16190</name>
</gene>
<evidence type="ECO:0000269" key="1">
    <source>
    </source>
</evidence>
<evidence type="ECO:0000305" key="2"/>
<evidence type="ECO:0000312" key="3">
    <source>
        <dbReference type="Araport" id="AT3G16190"/>
    </source>
</evidence>
<name>NIC4_ARATH</name>
<dbReference type="EMBL" id="AB023046">
    <property type="status" value="NOT_ANNOTATED_CDS"/>
    <property type="molecule type" value="Genomic_DNA"/>
</dbReference>
<dbReference type="EMBL" id="CP002686">
    <property type="protein sequence ID" value="AEE75782.1"/>
    <property type="molecule type" value="Genomic_DNA"/>
</dbReference>
<dbReference type="EMBL" id="AY058125">
    <property type="protein sequence ID" value="AAL25541.1"/>
    <property type="molecule type" value="mRNA"/>
</dbReference>
<dbReference type="EMBL" id="AY143919">
    <property type="protein sequence ID" value="AAN28858.1"/>
    <property type="molecule type" value="mRNA"/>
</dbReference>
<dbReference type="EMBL" id="AY086380">
    <property type="protein sequence ID" value="AAM64447.1"/>
    <property type="molecule type" value="mRNA"/>
</dbReference>
<dbReference type="RefSeq" id="NP_566539.1">
    <property type="nucleotide sequence ID" value="NM_112490.4"/>
</dbReference>
<dbReference type="SMR" id="Q93Z51"/>
<dbReference type="FunCoup" id="Q93Z51">
    <property type="interactions" value="754"/>
</dbReference>
<dbReference type="IntAct" id="Q93Z51">
    <property type="interactions" value="1"/>
</dbReference>
<dbReference type="STRING" id="3702.Q93Z51"/>
<dbReference type="PaxDb" id="3702-AT3G16190.1"/>
<dbReference type="ProteomicsDB" id="249388"/>
<dbReference type="EnsemblPlants" id="AT3G16190.1">
    <property type="protein sequence ID" value="AT3G16190.1"/>
    <property type="gene ID" value="AT3G16190"/>
</dbReference>
<dbReference type="GeneID" id="820865"/>
<dbReference type="Gramene" id="AT3G16190.1">
    <property type="protein sequence ID" value="AT3G16190.1"/>
    <property type="gene ID" value="AT3G16190"/>
</dbReference>
<dbReference type="KEGG" id="ath:AT3G16190"/>
<dbReference type="Araport" id="AT3G16190"/>
<dbReference type="TAIR" id="AT3G16190"/>
<dbReference type="eggNOG" id="ENOG502QS7S">
    <property type="taxonomic scope" value="Eukaryota"/>
</dbReference>
<dbReference type="HOGENOM" id="CLU_068979_14_1_1"/>
<dbReference type="InParanoid" id="Q93Z51"/>
<dbReference type="OMA" id="WHKSNAL"/>
<dbReference type="PhylomeDB" id="Q93Z51"/>
<dbReference type="PRO" id="PR:Q93Z51"/>
<dbReference type="Proteomes" id="UP000006548">
    <property type="component" value="Chromosome 3"/>
</dbReference>
<dbReference type="ExpressionAtlas" id="Q93Z51">
    <property type="expression patterns" value="baseline and differential"/>
</dbReference>
<dbReference type="GO" id="GO:0005829">
    <property type="term" value="C:cytosol"/>
    <property type="evidence" value="ECO:0007005"/>
    <property type="project" value="TAIR"/>
</dbReference>
<dbReference type="CDD" id="cd00431">
    <property type="entry name" value="cysteine_hydrolases"/>
    <property type="match status" value="1"/>
</dbReference>
<dbReference type="Gene3D" id="3.40.50.850">
    <property type="entry name" value="Isochorismatase-like"/>
    <property type="match status" value="1"/>
</dbReference>
<dbReference type="InterPro" id="IPR000868">
    <property type="entry name" value="Isochorismatase-like_dom"/>
</dbReference>
<dbReference type="InterPro" id="IPR036380">
    <property type="entry name" value="Isochorismatase-like_sf"/>
</dbReference>
<dbReference type="PANTHER" id="PTHR47044">
    <property type="entry name" value="OS02G0276400 PROTEIN"/>
    <property type="match status" value="1"/>
</dbReference>
<dbReference type="Pfam" id="PF00857">
    <property type="entry name" value="Isochorismatase"/>
    <property type="match status" value="1"/>
</dbReference>
<dbReference type="SUPFAM" id="SSF52499">
    <property type="entry name" value="Isochorismatase-like hydrolases"/>
    <property type="match status" value="1"/>
</dbReference>
<reference key="1">
    <citation type="journal article" date="2000" name="DNA Res.">
        <title>Structural analysis of Arabidopsis thaliana chromosome 3. I. Sequence features of the regions of 4,504,864 bp covered by sixty P1 and TAC clones.</title>
        <authorList>
            <person name="Sato S."/>
            <person name="Nakamura Y."/>
            <person name="Kaneko T."/>
            <person name="Katoh T."/>
            <person name="Asamizu E."/>
            <person name="Tabata S."/>
        </authorList>
    </citation>
    <scope>NUCLEOTIDE SEQUENCE [LARGE SCALE GENOMIC DNA]</scope>
    <source>
        <strain>cv. Columbia</strain>
    </source>
</reference>
<reference key="2">
    <citation type="journal article" date="2017" name="Plant J.">
        <title>Araport11: a complete reannotation of the Arabidopsis thaliana reference genome.</title>
        <authorList>
            <person name="Cheng C.Y."/>
            <person name="Krishnakumar V."/>
            <person name="Chan A.P."/>
            <person name="Thibaud-Nissen F."/>
            <person name="Schobel S."/>
            <person name="Town C.D."/>
        </authorList>
    </citation>
    <scope>GENOME REANNOTATION</scope>
    <source>
        <strain>cv. Columbia</strain>
    </source>
</reference>
<reference key="3">
    <citation type="journal article" date="2003" name="Science">
        <title>Empirical analysis of transcriptional activity in the Arabidopsis genome.</title>
        <authorList>
            <person name="Yamada K."/>
            <person name="Lim J."/>
            <person name="Dale J.M."/>
            <person name="Chen H."/>
            <person name="Shinn P."/>
            <person name="Palm C.J."/>
            <person name="Southwick A.M."/>
            <person name="Wu H.C."/>
            <person name="Kim C.J."/>
            <person name="Nguyen M."/>
            <person name="Pham P.K."/>
            <person name="Cheuk R.F."/>
            <person name="Karlin-Newmann G."/>
            <person name="Liu S.X."/>
            <person name="Lam B."/>
            <person name="Sakano H."/>
            <person name="Wu T."/>
            <person name="Yu G."/>
            <person name="Miranda M."/>
            <person name="Quach H.L."/>
            <person name="Tripp M."/>
            <person name="Chang C.H."/>
            <person name="Lee J.M."/>
            <person name="Toriumi M.J."/>
            <person name="Chan M.M."/>
            <person name="Tang C.C."/>
            <person name="Onodera C.S."/>
            <person name="Deng J.M."/>
            <person name="Akiyama K."/>
            <person name="Ansari Y."/>
            <person name="Arakawa T."/>
            <person name="Banh J."/>
            <person name="Banno F."/>
            <person name="Bowser L."/>
            <person name="Brooks S.Y."/>
            <person name="Carninci P."/>
            <person name="Chao Q."/>
            <person name="Choy N."/>
            <person name="Enju A."/>
            <person name="Goldsmith A.D."/>
            <person name="Gurjal M."/>
            <person name="Hansen N.F."/>
            <person name="Hayashizaki Y."/>
            <person name="Johnson-Hopson C."/>
            <person name="Hsuan V.W."/>
            <person name="Iida K."/>
            <person name="Karnes M."/>
            <person name="Khan S."/>
            <person name="Koesema E."/>
            <person name="Ishida J."/>
            <person name="Jiang P.X."/>
            <person name="Jones T."/>
            <person name="Kawai J."/>
            <person name="Kamiya A."/>
            <person name="Meyers C."/>
            <person name="Nakajima M."/>
            <person name="Narusaka M."/>
            <person name="Seki M."/>
            <person name="Sakurai T."/>
            <person name="Satou M."/>
            <person name="Tamse R."/>
            <person name="Vaysberg M."/>
            <person name="Wallender E.K."/>
            <person name="Wong C."/>
            <person name="Yamamura Y."/>
            <person name="Yuan S."/>
            <person name="Shinozaki K."/>
            <person name="Davis R.W."/>
            <person name="Theologis A."/>
            <person name="Ecker J.R."/>
        </authorList>
    </citation>
    <scope>NUCLEOTIDE SEQUENCE [LARGE SCALE MRNA]</scope>
    <source>
        <strain>cv. Columbia</strain>
    </source>
</reference>
<reference key="4">
    <citation type="submission" date="2002-03" db="EMBL/GenBank/DDBJ databases">
        <title>Full-length cDNA from Arabidopsis thaliana.</title>
        <authorList>
            <person name="Brover V.V."/>
            <person name="Troukhan M.E."/>
            <person name="Alexandrov N.A."/>
            <person name="Lu Y.-P."/>
            <person name="Flavell R.B."/>
            <person name="Feldmann K.A."/>
        </authorList>
    </citation>
    <scope>NUCLEOTIDE SEQUENCE [LARGE SCALE MRNA]</scope>
</reference>
<reference key="5">
    <citation type="journal article" date="2007" name="Plant J.">
        <title>Nicotinamidase activity is important for germination.</title>
        <authorList>
            <person name="Hunt L."/>
            <person name="Holdsworth M.J."/>
            <person name="Gray J.E."/>
        </authorList>
    </citation>
    <scope>FUNCTION</scope>
</reference>
<comment type="function">
    <text evidence="1">Does not possess nicotinamidase activity in vitro.</text>
</comment>
<comment type="similarity">
    <text evidence="2">Belongs to the isochorismatase family.</text>
</comment>
<proteinExistence type="evidence at transcript level"/>
<keyword id="KW-1185">Reference proteome</keyword>
<protein>
    <recommendedName>
        <fullName evidence="2">Probable inactive nicotinamidase At3g16190</fullName>
    </recommendedName>
</protein>
<sequence>MAERWRNTALLVIDMQNDFIEEGAVTQVKGGKSIVPNVIRVVELARQRGILVIWVVREHDRQGRDVELFRRHNYSSEKVGPVIKGTVGAELVDGLMINEEDDYKIVKTRFSAFFSTNLHSFLQTSGVTKLVIAGVQTPNCIRQTVFDAVALDYPNVTVITDATAAATPEIHTANILDMKNIGVKTPTLHEWSEELA</sequence>
<accession>Q93Z51</accession>
<feature type="chain" id="PRO_0000431490" description="Probable inactive nicotinamidase At3g16190">
    <location>
        <begin position="1"/>
        <end position="196"/>
    </location>
</feature>
<organism>
    <name type="scientific">Arabidopsis thaliana</name>
    <name type="common">Mouse-ear cress</name>
    <dbReference type="NCBI Taxonomy" id="3702"/>
    <lineage>
        <taxon>Eukaryota</taxon>
        <taxon>Viridiplantae</taxon>
        <taxon>Streptophyta</taxon>
        <taxon>Embryophyta</taxon>
        <taxon>Tracheophyta</taxon>
        <taxon>Spermatophyta</taxon>
        <taxon>Magnoliopsida</taxon>
        <taxon>eudicotyledons</taxon>
        <taxon>Gunneridae</taxon>
        <taxon>Pentapetalae</taxon>
        <taxon>rosids</taxon>
        <taxon>malvids</taxon>
        <taxon>Brassicales</taxon>
        <taxon>Brassicaceae</taxon>
        <taxon>Camelineae</taxon>
        <taxon>Arabidopsis</taxon>
    </lineage>
</organism>